<organism>
    <name type="scientific">Shewanella frigidimarina (strain NCIMB 400)</name>
    <dbReference type="NCBI Taxonomy" id="318167"/>
    <lineage>
        <taxon>Bacteria</taxon>
        <taxon>Pseudomonadati</taxon>
        <taxon>Pseudomonadota</taxon>
        <taxon>Gammaproteobacteria</taxon>
        <taxon>Alteromonadales</taxon>
        <taxon>Shewanellaceae</taxon>
        <taxon>Shewanella</taxon>
    </lineage>
</organism>
<dbReference type="EC" id="7.6.2.5" evidence="1"/>
<dbReference type="EMBL" id="CP000447">
    <property type="protein sequence ID" value="ABI70042.1"/>
    <property type="molecule type" value="Genomic_DNA"/>
</dbReference>
<dbReference type="SMR" id="Q089M3"/>
<dbReference type="STRING" id="318167.Sfri_0179"/>
<dbReference type="KEGG" id="sfr:Sfri_0179"/>
<dbReference type="eggNOG" id="COG4133">
    <property type="taxonomic scope" value="Bacteria"/>
</dbReference>
<dbReference type="HOGENOM" id="CLU_000604_1_2_6"/>
<dbReference type="OrthoDB" id="9800654at2"/>
<dbReference type="Proteomes" id="UP000000684">
    <property type="component" value="Chromosome"/>
</dbReference>
<dbReference type="GO" id="GO:0005886">
    <property type="term" value="C:plasma membrane"/>
    <property type="evidence" value="ECO:0007669"/>
    <property type="project" value="UniProtKB-SubCell"/>
</dbReference>
<dbReference type="GO" id="GO:0015439">
    <property type="term" value="F:ABC-type heme transporter activity"/>
    <property type="evidence" value="ECO:0007669"/>
    <property type="project" value="UniProtKB-EC"/>
</dbReference>
<dbReference type="GO" id="GO:0005524">
    <property type="term" value="F:ATP binding"/>
    <property type="evidence" value="ECO:0007669"/>
    <property type="project" value="UniProtKB-KW"/>
</dbReference>
<dbReference type="GO" id="GO:0016887">
    <property type="term" value="F:ATP hydrolysis activity"/>
    <property type="evidence" value="ECO:0007669"/>
    <property type="project" value="InterPro"/>
</dbReference>
<dbReference type="GO" id="GO:0017004">
    <property type="term" value="P:cytochrome complex assembly"/>
    <property type="evidence" value="ECO:0007669"/>
    <property type="project" value="UniProtKB-KW"/>
</dbReference>
<dbReference type="Gene3D" id="3.40.50.300">
    <property type="entry name" value="P-loop containing nucleotide triphosphate hydrolases"/>
    <property type="match status" value="1"/>
</dbReference>
<dbReference type="InterPro" id="IPR003593">
    <property type="entry name" value="AAA+_ATPase"/>
</dbReference>
<dbReference type="InterPro" id="IPR003439">
    <property type="entry name" value="ABC_transporter-like_ATP-bd"/>
</dbReference>
<dbReference type="InterPro" id="IPR005895">
    <property type="entry name" value="ABC_transptr_haem_export_CcmA"/>
</dbReference>
<dbReference type="InterPro" id="IPR027417">
    <property type="entry name" value="P-loop_NTPase"/>
</dbReference>
<dbReference type="NCBIfam" id="TIGR01189">
    <property type="entry name" value="ccmA"/>
    <property type="match status" value="1"/>
</dbReference>
<dbReference type="NCBIfam" id="NF010061">
    <property type="entry name" value="PRK13538.1"/>
    <property type="match status" value="1"/>
</dbReference>
<dbReference type="PANTHER" id="PTHR43499">
    <property type="entry name" value="ABC TRANSPORTER I FAMILY MEMBER 1"/>
    <property type="match status" value="1"/>
</dbReference>
<dbReference type="PANTHER" id="PTHR43499:SF1">
    <property type="entry name" value="ABC TRANSPORTER I FAMILY MEMBER 1"/>
    <property type="match status" value="1"/>
</dbReference>
<dbReference type="Pfam" id="PF00005">
    <property type="entry name" value="ABC_tran"/>
    <property type="match status" value="1"/>
</dbReference>
<dbReference type="SMART" id="SM00382">
    <property type="entry name" value="AAA"/>
    <property type="match status" value="1"/>
</dbReference>
<dbReference type="SUPFAM" id="SSF52540">
    <property type="entry name" value="P-loop containing nucleoside triphosphate hydrolases"/>
    <property type="match status" value="1"/>
</dbReference>
<dbReference type="PROSITE" id="PS50893">
    <property type="entry name" value="ABC_TRANSPORTER_2"/>
    <property type="match status" value="1"/>
</dbReference>
<dbReference type="PROSITE" id="PS51243">
    <property type="entry name" value="CCMA"/>
    <property type="match status" value="1"/>
</dbReference>
<sequence length="216" mass="23996">MTISNQSQVLLSANELTCIREERILFDGLSFNINAGDIVQIEGPNGAGKTSLLRIIAGLSRPYAGEVEYSGENINRCRDEFNHDLLYLGHLAGVKSELTAEENLNFNLRISGYDDFDTTAILAKVNLTGFEEALAGHLSAGQHRRTALARLQHSNCKIWILDEPFTAIDKKGVEELEQLFIQHAESGGCVILTTHQDMSIISDAMLRKITLDYRFV</sequence>
<keyword id="KW-0067">ATP-binding</keyword>
<keyword id="KW-0997">Cell inner membrane</keyword>
<keyword id="KW-1003">Cell membrane</keyword>
<keyword id="KW-0201">Cytochrome c-type biogenesis</keyword>
<keyword id="KW-0472">Membrane</keyword>
<keyword id="KW-0547">Nucleotide-binding</keyword>
<keyword id="KW-1185">Reference proteome</keyword>
<keyword id="KW-1278">Translocase</keyword>
<keyword id="KW-0813">Transport</keyword>
<accession>Q089M3</accession>
<protein>
    <recommendedName>
        <fullName evidence="1">Cytochrome c biogenesis ATP-binding export protein CcmA</fullName>
        <ecNumber evidence="1">7.6.2.5</ecNumber>
    </recommendedName>
    <alternativeName>
        <fullName evidence="1">Heme exporter protein A</fullName>
    </alternativeName>
</protein>
<feature type="chain" id="PRO_0000271956" description="Cytochrome c biogenesis ATP-binding export protein CcmA">
    <location>
        <begin position="1"/>
        <end position="216"/>
    </location>
</feature>
<feature type="domain" description="ABC transporter" evidence="1">
    <location>
        <begin position="11"/>
        <end position="216"/>
    </location>
</feature>
<feature type="binding site" evidence="1">
    <location>
        <begin position="43"/>
        <end position="50"/>
    </location>
    <ligand>
        <name>ATP</name>
        <dbReference type="ChEBI" id="CHEBI:30616"/>
    </ligand>
</feature>
<name>CCMA_SHEFN</name>
<reference key="1">
    <citation type="submission" date="2006-08" db="EMBL/GenBank/DDBJ databases">
        <title>Complete sequence of Shewanella frigidimarina NCIMB 400.</title>
        <authorList>
            <consortium name="US DOE Joint Genome Institute"/>
            <person name="Copeland A."/>
            <person name="Lucas S."/>
            <person name="Lapidus A."/>
            <person name="Barry K."/>
            <person name="Detter J.C."/>
            <person name="Glavina del Rio T."/>
            <person name="Hammon N."/>
            <person name="Israni S."/>
            <person name="Dalin E."/>
            <person name="Tice H."/>
            <person name="Pitluck S."/>
            <person name="Fredrickson J.K."/>
            <person name="Kolker E."/>
            <person name="McCuel L.A."/>
            <person name="DiChristina T."/>
            <person name="Nealson K.H."/>
            <person name="Newman D."/>
            <person name="Tiedje J.M."/>
            <person name="Zhou J."/>
            <person name="Romine M.F."/>
            <person name="Culley D.E."/>
            <person name="Serres M."/>
            <person name="Chertkov O."/>
            <person name="Brettin T."/>
            <person name="Bruce D."/>
            <person name="Han C."/>
            <person name="Tapia R."/>
            <person name="Gilna P."/>
            <person name="Schmutz J."/>
            <person name="Larimer F."/>
            <person name="Land M."/>
            <person name="Hauser L."/>
            <person name="Kyrpides N."/>
            <person name="Mikhailova N."/>
            <person name="Richardson P."/>
        </authorList>
    </citation>
    <scope>NUCLEOTIDE SEQUENCE [LARGE SCALE GENOMIC DNA]</scope>
    <source>
        <strain>NCIMB 400</strain>
    </source>
</reference>
<gene>
    <name evidence="1" type="primary">ccmA</name>
    <name type="ordered locus">Sfri_0179</name>
</gene>
<evidence type="ECO:0000255" key="1">
    <source>
        <dbReference type="HAMAP-Rule" id="MF_01707"/>
    </source>
</evidence>
<proteinExistence type="inferred from homology"/>
<comment type="function">
    <text evidence="1">Part of the ABC transporter complex CcmAB involved in the biogenesis of c-type cytochromes; once thought to export heme, this seems not to be the case, but its exact role is uncertain. Responsible for energy coupling to the transport system.</text>
</comment>
<comment type="catalytic activity">
    <reaction evidence="1">
        <text>heme b(in) + ATP + H2O = heme b(out) + ADP + phosphate + H(+)</text>
        <dbReference type="Rhea" id="RHEA:19261"/>
        <dbReference type="ChEBI" id="CHEBI:15377"/>
        <dbReference type="ChEBI" id="CHEBI:15378"/>
        <dbReference type="ChEBI" id="CHEBI:30616"/>
        <dbReference type="ChEBI" id="CHEBI:43474"/>
        <dbReference type="ChEBI" id="CHEBI:60344"/>
        <dbReference type="ChEBI" id="CHEBI:456216"/>
        <dbReference type="EC" id="7.6.2.5"/>
    </reaction>
</comment>
<comment type="subunit">
    <text evidence="1">The complex is composed of two ATP-binding proteins (CcmA) and two transmembrane proteins (CcmB).</text>
</comment>
<comment type="subcellular location">
    <subcellularLocation>
        <location evidence="1">Cell inner membrane</location>
        <topology evidence="1">Peripheral membrane protein</topology>
    </subcellularLocation>
</comment>
<comment type="similarity">
    <text evidence="1">Belongs to the ABC transporter superfamily. CcmA exporter (TC 3.A.1.107) family.</text>
</comment>